<keyword id="KW-0002">3D-structure</keyword>
<keyword id="KW-0025">Alternative splicing</keyword>
<keyword id="KW-0175">Coiled coil</keyword>
<keyword id="KW-1017">Isopeptide bond</keyword>
<keyword id="KW-0507">mRNA processing</keyword>
<keyword id="KW-0508">mRNA splicing</keyword>
<keyword id="KW-0539">Nucleus</keyword>
<keyword id="KW-0597">Phosphoprotein</keyword>
<keyword id="KW-1267">Proteomics identification</keyword>
<keyword id="KW-1185">Reference proteome</keyword>
<keyword id="KW-0747">Spliceosome</keyword>
<keyword id="KW-0832">Ubl conjugation</keyword>
<proteinExistence type="evidence at protein level"/>
<evidence type="ECO:0000250" key="1">
    <source>
        <dbReference type="UniProtKB" id="Q4QQU1"/>
    </source>
</evidence>
<evidence type="ECO:0000250" key="2">
    <source>
        <dbReference type="UniProtKB" id="Q8R149"/>
    </source>
</evidence>
<evidence type="ECO:0000255" key="3"/>
<evidence type="ECO:0000256" key="4">
    <source>
        <dbReference type="SAM" id="MobiDB-lite"/>
    </source>
</evidence>
<evidence type="ECO:0000269" key="5">
    <source>
    </source>
</evidence>
<evidence type="ECO:0000269" key="6">
    <source>
    </source>
</evidence>
<evidence type="ECO:0000269" key="7">
    <source>
    </source>
</evidence>
<evidence type="ECO:0000303" key="8">
    <source>
    </source>
</evidence>
<evidence type="ECO:0000305" key="9"/>
<evidence type="ECO:0000305" key="10">
    <source>
    </source>
</evidence>
<evidence type="ECO:0007744" key="11">
    <source>
        <dbReference type="PDB" id="5Z56"/>
    </source>
</evidence>
<evidence type="ECO:0007744" key="12">
    <source>
        <dbReference type="PDB" id="5Z57"/>
    </source>
</evidence>
<evidence type="ECO:0007744" key="13">
    <source>
        <dbReference type="PDB" id="5Z58"/>
    </source>
</evidence>
<evidence type="ECO:0007744" key="14">
    <source>
        <dbReference type="PDB" id="6FF4"/>
    </source>
</evidence>
<evidence type="ECO:0007744" key="15">
    <source>
        <dbReference type="PDB" id="7DVQ"/>
    </source>
</evidence>
<evidence type="ECO:0007744" key="16">
    <source>
    </source>
</evidence>
<evidence type="ECO:0007744" key="17">
    <source>
    </source>
</evidence>
<evidence type="ECO:0007744" key="18">
    <source>
    </source>
</evidence>
<evidence type="ECO:0007744" key="19">
    <source>
    </source>
</evidence>
<evidence type="ECO:0007744" key="20">
    <source>
    </source>
</evidence>
<evidence type="ECO:0007744" key="21">
    <source>
    </source>
</evidence>
<evidence type="ECO:0007744" key="22">
    <source>
    </source>
</evidence>
<evidence type="ECO:0007744" key="23">
    <source>
    </source>
</evidence>
<evidence type="ECO:0007744" key="24">
    <source>
    </source>
</evidence>
<evidence type="ECO:0007744" key="25">
    <source>
    </source>
</evidence>
<evidence type="ECO:0007744" key="26">
    <source>
    </source>
</evidence>
<evidence type="ECO:0007744" key="27">
    <source>
    </source>
</evidence>
<evidence type="ECO:0007829" key="28">
    <source>
        <dbReference type="PDB" id="6FF4"/>
    </source>
</evidence>
<evidence type="ECO:0007829" key="29">
    <source>
        <dbReference type="PDB" id="7DVQ"/>
    </source>
</evidence>
<gene>
    <name type="primary">BUD13</name>
</gene>
<organism>
    <name type="scientific">Homo sapiens</name>
    <name type="common">Human</name>
    <dbReference type="NCBI Taxonomy" id="9606"/>
    <lineage>
        <taxon>Eukaryota</taxon>
        <taxon>Metazoa</taxon>
        <taxon>Chordata</taxon>
        <taxon>Craniata</taxon>
        <taxon>Vertebrata</taxon>
        <taxon>Euteleostomi</taxon>
        <taxon>Mammalia</taxon>
        <taxon>Eutheria</taxon>
        <taxon>Euarchontoglires</taxon>
        <taxon>Primates</taxon>
        <taxon>Haplorrhini</taxon>
        <taxon>Catarrhini</taxon>
        <taxon>Hominidae</taxon>
        <taxon>Homo</taxon>
    </lineage>
</organism>
<feature type="chain" id="PRO_0000287688" description="BUD13 homolog">
    <location>
        <begin position="1"/>
        <end position="619"/>
    </location>
</feature>
<feature type="region of interest" description="Disordered" evidence="4">
    <location>
        <begin position="20"/>
        <end position="56"/>
    </location>
</feature>
<feature type="region of interest" description="Disordered" evidence="4">
    <location>
        <begin position="106"/>
        <end position="429"/>
    </location>
</feature>
<feature type="region of interest" description="Disordered" evidence="4">
    <location>
        <begin position="538"/>
        <end position="578"/>
    </location>
</feature>
<feature type="coiled-coil region" evidence="3">
    <location>
        <begin position="433"/>
        <end position="520"/>
    </location>
</feature>
<feature type="compositionally biased region" description="Basic and acidic residues" evidence="4">
    <location>
        <begin position="109"/>
        <end position="128"/>
    </location>
</feature>
<feature type="compositionally biased region" description="Basic and acidic residues" evidence="4">
    <location>
        <begin position="139"/>
        <end position="160"/>
    </location>
</feature>
<feature type="compositionally biased region" description="Polar residues" evidence="4">
    <location>
        <begin position="246"/>
        <end position="264"/>
    </location>
</feature>
<feature type="compositionally biased region" description="Basic and acidic residues" evidence="4">
    <location>
        <begin position="289"/>
        <end position="306"/>
    </location>
</feature>
<feature type="compositionally biased region" description="Basic and acidic residues" evidence="4">
    <location>
        <begin position="335"/>
        <end position="353"/>
    </location>
</feature>
<feature type="compositionally biased region" description="Low complexity" evidence="4">
    <location>
        <begin position="404"/>
        <end position="415"/>
    </location>
</feature>
<feature type="modified residue" description="Phosphoserine" evidence="24">
    <location>
        <position position="28"/>
    </location>
</feature>
<feature type="modified residue" description="Phosphothreonine" evidence="2">
    <location>
        <position position="123"/>
    </location>
</feature>
<feature type="modified residue" description="Phosphoserine" evidence="1">
    <location>
        <position position="127"/>
    </location>
</feature>
<feature type="modified residue" description="Phosphothreonine" evidence="25">
    <location>
        <position position="135"/>
    </location>
</feature>
<feature type="modified residue" description="Phosphoserine" evidence="2">
    <location>
        <position position="139"/>
    </location>
</feature>
<feature type="modified residue" description="Phosphothreonine" evidence="18 22 23">
    <location>
        <position position="147"/>
    </location>
</feature>
<feature type="modified residue" description="Phosphoserine" evidence="18 22 23 25">
    <location>
        <position position="151"/>
    </location>
</feature>
<feature type="modified residue" description="Phosphothreonine" evidence="22 23 24">
    <location>
        <position position="159"/>
    </location>
</feature>
<feature type="modified residue" description="Phosphoserine" evidence="22 23 24">
    <location>
        <position position="163"/>
    </location>
</feature>
<feature type="modified residue" description="Phosphoserine" evidence="1">
    <location>
        <position position="172"/>
    </location>
</feature>
<feature type="modified residue" description="Phosphoserine" evidence="2">
    <location>
        <position position="175"/>
    </location>
</feature>
<feature type="modified residue" description="Phosphoserine" evidence="22 24">
    <location>
        <position position="197"/>
    </location>
</feature>
<feature type="modified residue" description="Phosphoserine" evidence="22 24">
    <location>
        <position position="201"/>
    </location>
</feature>
<feature type="modified residue" description="Phosphoserine" evidence="24">
    <location>
        <position position="214"/>
    </location>
</feature>
<feature type="modified residue" description="Phosphoserine" evidence="22 23 24">
    <location>
        <position position="222"/>
    </location>
</feature>
<feature type="modified residue" description="Phosphoserine" evidence="22 23 24">
    <location>
        <position position="226"/>
    </location>
</feature>
<feature type="modified residue" description="Phosphoserine" evidence="22 23">
    <location>
        <position position="235"/>
    </location>
</feature>
<feature type="modified residue" description="Phosphoserine" evidence="23">
    <location>
        <position position="236"/>
    </location>
</feature>
<feature type="modified residue" description="Phosphoserine" evidence="22 23">
    <location>
        <position position="240"/>
    </location>
</feature>
<feature type="modified residue" description="Phosphoserine" evidence="22 23">
    <location>
        <position position="248"/>
    </location>
</feature>
<feature type="modified residue" description="Phosphoserine" evidence="24">
    <location>
        <position position="258"/>
    </location>
</feature>
<feature type="modified residue" description="Phosphoserine" evidence="24">
    <location>
        <position position="259"/>
    </location>
</feature>
<feature type="modified residue" description="Phosphoserine" evidence="18 19 20 21 22 23 24">
    <location>
        <position position="271"/>
    </location>
</feature>
<feature type="modified residue" description="Phosphoserine" evidence="24">
    <location>
        <position position="281"/>
    </location>
</feature>
<feature type="modified residue" description="Phosphoserine" evidence="17 19 20 21 22 23 24">
    <location>
        <position position="325"/>
    </location>
</feature>
<feature type="modified residue" description="Phosphoserine" evidence="20">
    <location>
        <position position="354"/>
    </location>
</feature>
<feature type="modified residue" description="Phosphoserine" evidence="2">
    <location>
        <position position="357"/>
    </location>
</feature>
<feature type="modified residue" description="Phosphoserine" evidence="20 22 23">
    <location>
        <position position="358"/>
    </location>
</feature>
<feature type="modified residue" description="Phosphoserine" evidence="24">
    <location>
        <position position="391"/>
    </location>
</feature>
<feature type="modified residue" description="Phosphoserine" evidence="24">
    <location>
        <position position="407"/>
    </location>
</feature>
<feature type="modified residue" description="Phosphotyrosine" evidence="16">
    <location>
        <position position="494"/>
    </location>
</feature>
<feature type="modified residue" description="Phosphoserine" evidence="24">
    <location>
        <position position="567"/>
    </location>
</feature>
<feature type="cross-link" description="Glycyl lysine isopeptide (Lys-Gly) (interchain with G-Cter in SUMO2)" evidence="26 27">
    <location>
        <position position="65"/>
    </location>
</feature>
<feature type="splice variant" id="VSP_025590" description="In isoform 2." evidence="8">
    <location>
        <begin position="212"/>
        <end position="345"/>
    </location>
</feature>
<feature type="sequence variant" id="VAR_032343" description="In dbSNP:rs10488698.">
    <original>R</original>
    <variation>C</variation>
    <location>
        <position position="120"/>
    </location>
</feature>
<feature type="sequence variant" id="VAR_032344" description="In dbSNP:rs11820589.">
    <original>P</original>
    <variation>L</variation>
    <location>
        <position position="148"/>
    </location>
</feature>
<feature type="sequence variant" id="VAR_032345" description="In dbSNP:rs11216131.">
    <original>R</original>
    <variation>I</variation>
    <location>
        <position position="242"/>
    </location>
</feature>
<feature type="sequence variant" id="VAR_053908" description="In dbSNP:rs35004487.">
    <original>S</original>
    <variation>C</variation>
    <location>
        <position position="388"/>
    </location>
</feature>
<feature type="helix" evidence="29">
    <location>
        <begin position="481"/>
        <end position="499"/>
    </location>
</feature>
<feature type="helix" evidence="29">
    <location>
        <begin position="501"/>
        <end position="519"/>
    </location>
</feature>
<feature type="helix" evidence="29">
    <location>
        <begin position="529"/>
        <end position="536"/>
    </location>
</feature>
<feature type="helix" evidence="29">
    <location>
        <begin position="546"/>
        <end position="556"/>
    </location>
</feature>
<feature type="strand" evidence="28">
    <location>
        <begin position="559"/>
        <end position="563"/>
    </location>
</feature>
<feature type="helix" evidence="29">
    <location>
        <begin position="593"/>
        <end position="616"/>
    </location>
</feature>
<sequence length="619" mass="70521">MAAAPPLSKAEYLKRYLSGADAGVDRGSESGRKRRKKRPKPGGAGGKGMRIVDDDVSWTAISTTKLEKEEEEDDGDLPVVAEFVDERPEEVKQMEAFRSSAKWKLLGGHNEDLPSNRHFRHDTPDSSPRRVRHGTPDPSPRKDRHDTPDPSPRRARHDTPDPSPLRGARHDSDTSPPRRIRHDSSDTSPPRRARHDSPDPSPPRRPQHNSSGASPRRVRHDSPDPSPPRRARHGSSDISSPRRVHNNSPDTSRRTLGSSDTQQLRRARHDSPDLAPNVTYSLPRTKSGKAPERASSKTSPHWKESGASHLSFPKNSKYEYDPDISPPRKKQAKSHFGDKKQLDSKGDCQKATDSDLSSPRHKQSPGHQDSDSDLSPPRNRPRHRSSDSDLSPPRRRQRTKSSDSDLSPPRRSQPPGKKAAHMYSGAKTGLVLTDIQREQQELKEQDQETMAFEAEFQYAETVFRDKSGRKRNLKLERLEQRRKAEKDSERDELYAQWGKGLAQSRQQQQNVEDAMKEMQKPLARYIDDEDLDRMLREQEREGDPMANFIKKNKAKENKNKKVRPRYSGPAPPPNRFNIWPGYRWDGVDRSNGFEQKRFARLASKKAVEELAYKWSVEDM</sequence>
<comment type="function">
    <text evidence="5 6 10">Involved in pre-mRNA splicing as component of the activated spliceosome. As a component of the minor spliceosome, involved in the splicing of U12-type introns in pre-mRNAs (Probable).</text>
</comment>
<comment type="subunit">
    <text evidence="5 6 7">Part of the activated spliceosome B/catalytic step 1 spliceosome, one of the forms of the spliceosome which has a well-formed active site but still cannot catalyze the branching reaction and is composed of at least 52 proteins, the U2, U5 and U6 snRNAs and the pre-mRNA. Component of the minor spliceosome, which splices U12-type introns (PubMed:33509932).</text>
</comment>
<comment type="interaction">
    <interactant intactId="EBI-2561235">
        <id>Q9BRD0</id>
    </interactant>
    <interactant intactId="EBI-746309">
        <id>Q92917</id>
        <label>GPKOW</label>
    </interactant>
    <organismsDiffer>false</organismsDiffer>
    <experiments>13</experiments>
</comment>
<comment type="interaction">
    <interactant intactId="EBI-2561235">
        <id>Q9BRD0</id>
    </interactant>
    <interactant intactId="EBI-7704044">
        <id>Q9Y388</id>
        <label>RBMX2</label>
    </interactant>
    <organismsDiffer>false</organismsDiffer>
    <experiments>5</experiments>
</comment>
<comment type="subcellular location">
    <subcellularLocation>
        <location evidence="5 6">Nucleus</location>
    </subcellularLocation>
</comment>
<comment type="alternative products">
    <event type="alternative splicing"/>
    <isoform>
        <id>Q9BRD0-1</id>
        <name>1</name>
        <sequence type="displayed"/>
    </isoform>
    <isoform>
        <id>Q9BRD0-2</id>
        <name>2</name>
        <sequence type="described" ref="VSP_025590"/>
    </isoform>
</comment>
<comment type="similarity">
    <text evidence="9">Belongs to the CWC26 family.</text>
</comment>
<accession>Q9BRD0</accession>
<accession>A8K0S0</accession>
<accession>Q96LS7</accession>
<dbReference type="EMBL" id="AK057832">
    <property type="protein sequence ID" value="BAB71593.1"/>
    <property type="molecule type" value="mRNA"/>
</dbReference>
<dbReference type="EMBL" id="AK289635">
    <property type="protein sequence ID" value="BAF82324.1"/>
    <property type="molecule type" value="mRNA"/>
</dbReference>
<dbReference type="EMBL" id="CH471065">
    <property type="protein sequence ID" value="EAW67265.1"/>
    <property type="molecule type" value="Genomic_DNA"/>
</dbReference>
<dbReference type="EMBL" id="BC006350">
    <property type="protein sequence ID" value="AAH06350.1"/>
    <property type="molecule type" value="mRNA"/>
</dbReference>
<dbReference type="CCDS" id="CCDS53712.1">
    <molecule id="Q9BRD0-2"/>
</dbReference>
<dbReference type="CCDS" id="CCDS8374.1">
    <molecule id="Q9BRD0-1"/>
</dbReference>
<dbReference type="RefSeq" id="NP_001153208.1">
    <molecule id="Q9BRD0-2"/>
    <property type="nucleotide sequence ID" value="NM_001159736.2"/>
</dbReference>
<dbReference type="RefSeq" id="NP_116114.1">
    <molecule id="Q9BRD0-1"/>
    <property type="nucleotide sequence ID" value="NM_032725.4"/>
</dbReference>
<dbReference type="PDB" id="5Z56">
    <property type="method" value="EM"/>
    <property type="resolution" value="5.10 A"/>
    <property type="chains" value="Z=1-619"/>
</dbReference>
<dbReference type="PDB" id="5Z57">
    <property type="method" value="EM"/>
    <property type="resolution" value="6.50 A"/>
    <property type="chains" value="Z=1-619"/>
</dbReference>
<dbReference type="PDB" id="5Z58">
    <property type="method" value="EM"/>
    <property type="resolution" value="4.90 A"/>
    <property type="chains" value="Z=1-619"/>
</dbReference>
<dbReference type="PDB" id="6FF4">
    <property type="method" value="EM"/>
    <property type="resolution" value="16.00 A"/>
    <property type="chains" value="3=1-619"/>
</dbReference>
<dbReference type="PDB" id="6FF7">
    <property type="method" value="EM"/>
    <property type="resolution" value="4.50 A"/>
    <property type="chains" value="3=1-619"/>
</dbReference>
<dbReference type="PDB" id="7ABI">
    <property type="method" value="EM"/>
    <property type="resolution" value="8.00 A"/>
    <property type="chains" value="3=1-619"/>
</dbReference>
<dbReference type="PDB" id="7DVQ">
    <property type="method" value="EM"/>
    <property type="resolution" value="2.89 A"/>
    <property type="chains" value="Z=1-619"/>
</dbReference>
<dbReference type="PDB" id="7QTT">
    <property type="method" value="EM"/>
    <property type="resolution" value="3.10 A"/>
    <property type="chains" value="L=1-619"/>
</dbReference>
<dbReference type="PDB" id="8CH6">
    <property type="method" value="EM"/>
    <property type="resolution" value="5.90 A"/>
    <property type="chains" value="L=1-619"/>
</dbReference>
<dbReference type="PDB" id="8I0P">
    <property type="method" value="EM"/>
    <property type="resolution" value="3.40 A"/>
    <property type="chains" value="Z=1-619"/>
</dbReference>
<dbReference type="PDB" id="8I0R">
    <property type="method" value="EM"/>
    <property type="resolution" value="3.00 A"/>
    <property type="chains" value="Z=1-619"/>
</dbReference>
<dbReference type="PDBsum" id="5Z56"/>
<dbReference type="PDBsum" id="5Z57"/>
<dbReference type="PDBsum" id="5Z58"/>
<dbReference type="PDBsum" id="6FF4"/>
<dbReference type="PDBsum" id="6FF7"/>
<dbReference type="PDBsum" id="7ABI"/>
<dbReference type="PDBsum" id="7DVQ"/>
<dbReference type="PDBsum" id="7QTT"/>
<dbReference type="PDBsum" id="8CH6"/>
<dbReference type="PDBsum" id="8I0P"/>
<dbReference type="PDBsum" id="8I0R"/>
<dbReference type="EMDB" id="EMD-11697"/>
<dbReference type="EMDB" id="EMD-14146"/>
<dbReference type="EMDB" id="EMD-16658"/>
<dbReference type="EMDB" id="EMD-30875"/>
<dbReference type="EMDB" id="EMD-35105"/>
<dbReference type="EMDB" id="EMD-35107"/>
<dbReference type="EMDB" id="EMD-4255"/>
<dbReference type="EMDB" id="EMD-6889"/>
<dbReference type="EMDB" id="EMD-6890"/>
<dbReference type="EMDB" id="EMD-6891"/>
<dbReference type="SMR" id="Q9BRD0"/>
<dbReference type="BioGRID" id="124272">
    <property type="interactions" value="124"/>
</dbReference>
<dbReference type="ComplexPortal" id="CPX-2539">
    <property type="entry name" value="U2 small nuclear ribonucleoprotein complex"/>
</dbReference>
<dbReference type="FunCoup" id="Q9BRD0">
    <property type="interactions" value="3490"/>
</dbReference>
<dbReference type="IntAct" id="Q9BRD0">
    <property type="interactions" value="595"/>
</dbReference>
<dbReference type="MINT" id="Q9BRD0"/>
<dbReference type="STRING" id="9606.ENSP00000260210"/>
<dbReference type="iPTMnet" id="Q9BRD0"/>
<dbReference type="PhosphoSitePlus" id="Q9BRD0"/>
<dbReference type="BioMuta" id="BUD13"/>
<dbReference type="DMDM" id="74732865"/>
<dbReference type="jPOST" id="Q9BRD0"/>
<dbReference type="MassIVE" id="Q9BRD0"/>
<dbReference type="PaxDb" id="9606-ENSP00000260210"/>
<dbReference type="PeptideAtlas" id="Q9BRD0"/>
<dbReference type="ProteomicsDB" id="78758">
    <molecule id="Q9BRD0-1"/>
</dbReference>
<dbReference type="ProteomicsDB" id="78759">
    <molecule id="Q9BRD0-2"/>
</dbReference>
<dbReference type="Pumba" id="Q9BRD0"/>
<dbReference type="Antibodypedia" id="52338">
    <property type="antibodies" value="97 antibodies from 21 providers"/>
</dbReference>
<dbReference type="DNASU" id="84811"/>
<dbReference type="Ensembl" id="ENST00000260210.5">
    <molecule id="Q9BRD0-1"/>
    <property type="protein sequence ID" value="ENSP00000260210.3"/>
    <property type="gene ID" value="ENSG00000137656.12"/>
</dbReference>
<dbReference type="Ensembl" id="ENST00000375445.7">
    <molecule id="Q9BRD0-2"/>
    <property type="protein sequence ID" value="ENSP00000364594.3"/>
    <property type="gene ID" value="ENSG00000137656.12"/>
</dbReference>
<dbReference type="GeneID" id="84811"/>
<dbReference type="KEGG" id="hsa:84811"/>
<dbReference type="MANE-Select" id="ENST00000260210.5">
    <property type="protein sequence ID" value="ENSP00000260210.3"/>
    <property type="RefSeq nucleotide sequence ID" value="NM_032725.4"/>
    <property type="RefSeq protein sequence ID" value="NP_116114.1"/>
</dbReference>
<dbReference type="UCSC" id="uc001ppn.4">
    <molecule id="Q9BRD0-1"/>
    <property type="organism name" value="human"/>
</dbReference>
<dbReference type="AGR" id="HGNC:28199"/>
<dbReference type="CTD" id="84811"/>
<dbReference type="DisGeNET" id="84811"/>
<dbReference type="GeneCards" id="BUD13"/>
<dbReference type="HGNC" id="HGNC:28199">
    <property type="gene designation" value="BUD13"/>
</dbReference>
<dbReference type="HPA" id="ENSG00000137656">
    <property type="expression patterns" value="Low tissue specificity"/>
</dbReference>
<dbReference type="MIM" id="620691">
    <property type="type" value="gene"/>
</dbReference>
<dbReference type="neXtProt" id="NX_Q9BRD0"/>
<dbReference type="OpenTargets" id="ENSG00000137656"/>
<dbReference type="PharmGKB" id="PA144596512"/>
<dbReference type="VEuPathDB" id="HostDB:ENSG00000137656"/>
<dbReference type="eggNOG" id="KOG2654">
    <property type="taxonomic scope" value="Eukaryota"/>
</dbReference>
<dbReference type="GeneTree" id="ENSGT00390000014500"/>
<dbReference type="HOGENOM" id="CLU_024195_3_1_1"/>
<dbReference type="InParanoid" id="Q9BRD0"/>
<dbReference type="OMA" id="FEAEFQF"/>
<dbReference type="OrthoDB" id="6022at2759"/>
<dbReference type="PAN-GO" id="Q9BRD0">
    <property type="GO annotations" value="3 GO annotations based on evolutionary models"/>
</dbReference>
<dbReference type="PhylomeDB" id="Q9BRD0"/>
<dbReference type="TreeFam" id="TF315331"/>
<dbReference type="PathwayCommons" id="Q9BRD0"/>
<dbReference type="Reactome" id="R-HSA-72163">
    <property type="pathway name" value="mRNA Splicing - Major Pathway"/>
</dbReference>
<dbReference type="SignaLink" id="Q9BRD0"/>
<dbReference type="SIGNOR" id="Q9BRD0"/>
<dbReference type="BioGRID-ORCS" id="84811">
    <property type="hits" value="468 hits in 1155 CRISPR screens"/>
</dbReference>
<dbReference type="ChiTaRS" id="BUD13">
    <property type="organism name" value="human"/>
</dbReference>
<dbReference type="GenomeRNAi" id="84811"/>
<dbReference type="Pharos" id="Q9BRD0">
    <property type="development level" value="Tbio"/>
</dbReference>
<dbReference type="PRO" id="PR:Q9BRD0"/>
<dbReference type="Proteomes" id="UP000005640">
    <property type="component" value="Chromosome 11"/>
</dbReference>
<dbReference type="RNAct" id="Q9BRD0">
    <property type="molecule type" value="protein"/>
</dbReference>
<dbReference type="Bgee" id="ENSG00000137656">
    <property type="expression patterns" value="Expressed in secondary oocyte and 171 other cell types or tissues"/>
</dbReference>
<dbReference type="ExpressionAtlas" id="Q9BRD0">
    <property type="expression patterns" value="baseline and differential"/>
</dbReference>
<dbReference type="GO" id="GO:0005654">
    <property type="term" value="C:nucleoplasm"/>
    <property type="evidence" value="ECO:0000314"/>
    <property type="project" value="HPA"/>
</dbReference>
<dbReference type="GO" id="GO:0005634">
    <property type="term" value="C:nucleus"/>
    <property type="evidence" value="ECO:0000314"/>
    <property type="project" value="UniProtKB"/>
</dbReference>
<dbReference type="GO" id="GO:0070274">
    <property type="term" value="C:RES complex"/>
    <property type="evidence" value="ECO:0000250"/>
    <property type="project" value="BHF-UCL"/>
</dbReference>
<dbReference type="GO" id="GO:0005681">
    <property type="term" value="C:spliceosomal complex"/>
    <property type="evidence" value="ECO:0000303"/>
    <property type="project" value="ComplexPortal"/>
</dbReference>
<dbReference type="GO" id="GO:0005686">
    <property type="term" value="C:U2 snRNP"/>
    <property type="evidence" value="ECO:0000303"/>
    <property type="project" value="ComplexPortal"/>
</dbReference>
<dbReference type="GO" id="GO:0071005">
    <property type="term" value="C:U2-type precatalytic spliceosome"/>
    <property type="evidence" value="ECO:0000314"/>
    <property type="project" value="UniProtKB"/>
</dbReference>
<dbReference type="GO" id="GO:0005684">
    <property type="term" value="C:U2-type spliceosomal complex"/>
    <property type="evidence" value="ECO:0000318"/>
    <property type="project" value="GO_Central"/>
</dbReference>
<dbReference type="GO" id="GO:0003723">
    <property type="term" value="F:RNA binding"/>
    <property type="evidence" value="ECO:0007005"/>
    <property type="project" value="UniProtKB"/>
</dbReference>
<dbReference type="GO" id="GO:0000398">
    <property type="term" value="P:mRNA splicing, via spliceosome"/>
    <property type="evidence" value="ECO:0000314"/>
    <property type="project" value="UniProtKB"/>
</dbReference>
<dbReference type="GO" id="GO:1903241">
    <property type="term" value="P:U2-type prespliceosome assembly"/>
    <property type="evidence" value="ECO:0000303"/>
    <property type="project" value="ComplexPortal"/>
</dbReference>
<dbReference type="InterPro" id="IPR018609">
    <property type="entry name" value="Bud13"/>
</dbReference>
<dbReference type="InterPro" id="IPR051112">
    <property type="entry name" value="CWC26_splicing_factor"/>
</dbReference>
<dbReference type="PANTHER" id="PTHR31809">
    <property type="entry name" value="BUD13 HOMOLOG"/>
    <property type="match status" value="1"/>
</dbReference>
<dbReference type="PANTHER" id="PTHR31809:SF0">
    <property type="entry name" value="BUD13 HOMOLOG"/>
    <property type="match status" value="1"/>
</dbReference>
<dbReference type="Pfam" id="PF09736">
    <property type="entry name" value="Bud13"/>
    <property type="match status" value="1"/>
</dbReference>
<protein>
    <recommendedName>
        <fullName>BUD13 homolog</fullName>
    </recommendedName>
</protein>
<reference key="1">
    <citation type="journal article" date="2004" name="Nat. Genet.">
        <title>Complete sequencing and characterization of 21,243 full-length human cDNAs.</title>
        <authorList>
            <person name="Ota T."/>
            <person name="Suzuki Y."/>
            <person name="Nishikawa T."/>
            <person name="Otsuki T."/>
            <person name="Sugiyama T."/>
            <person name="Irie R."/>
            <person name="Wakamatsu A."/>
            <person name="Hayashi K."/>
            <person name="Sato H."/>
            <person name="Nagai K."/>
            <person name="Kimura K."/>
            <person name="Makita H."/>
            <person name="Sekine M."/>
            <person name="Obayashi M."/>
            <person name="Nishi T."/>
            <person name="Shibahara T."/>
            <person name="Tanaka T."/>
            <person name="Ishii S."/>
            <person name="Yamamoto J."/>
            <person name="Saito K."/>
            <person name="Kawai Y."/>
            <person name="Isono Y."/>
            <person name="Nakamura Y."/>
            <person name="Nagahari K."/>
            <person name="Murakami K."/>
            <person name="Yasuda T."/>
            <person name="Iwayanagi T."/>
            <person name="Wagatsuma M."/>
            <person name="Shiratori A."/>
            <person name="Sudo H."/>
            <person name="Hosoiri T."/>
            <person name="Kaku Y."/>
            <person name="Kodaira H."/>
            <person name="Kondo H."/>
            <person name="Sugawara M."/>
            <person name="Takahashi M."/>
            <person name="Kanda K."/>
            <person name="Yokoi T."/>
            <person name="Furuya T."/>
            <person name="Kikkawa E."/>
            <person name="Omura Y."/>
            <person name="Abe K."/>
            <person name="Kamihara K."/>
            <person name="Katsuta N."/>
            <person name="Sato K."/>
            <person name="Tanikawa M."/>
            <person name="Yamazaki M."/>
            <person name="Ninomiya K."/>
            <person name="Ishibashi T."/>
            <person name="Yamashita H."/>
            <person name="Murakawa K."/>
            <person name="Fujimori K."/>
            <person name="Tanai H."/>
            <person name="Kimata M."/>
            <person name="Watanabe M."/>
            <person name="Hiraoka S."/>
            <person name="Chiba Y."/>
            <person name="Ishida S."/>
            <person name="Ono Y."/>
            <person name="Takiguchi S."/>
            <person name="Watanabe S."/>
            <person name="Yosida M."/>
            <person name="Hotuta T."/>
            <person name="Kusano J."/>
            <person name="Kanehori K."/>
            <person name="Takahashi-Fujii A."/>
            <person name="Hara H."/>
            <person name="Tanase T.-O."/>
            <person name="Nomura Y."/>
            <person name="Togiya S."/>
            <person name="Komai F."/>
            <person name="Hara R."/>
            <person name="Takeuchi K."/>
            <person name="Arita M."/>
            <person name="Imose N."/>
            <person name="Musashino K."/>
            <person name="Yuuki H."/>
            <person name="Oshima A."/>
            <person name="Sasaki N."/>
            <person name="Aotsuka S."/>
            <person name="Yoshikawa Y."/>
            <person name="Matsunawa H."/>
            <person name="Ichihara T."/>
            <person name="Shiohata N."/>
            <person name="Sano S."/>
            <person name="Moriya S."/>
            <person name="Momiyama H."/>
            <person name="Satoh N."/>
            <person name="Takami S."/>
            <person name="Terashima Y."/>
            <person name="Suzuki O."/>
            <person name="Nakagawa S."/>
            <person name="Senoh A."/>
            <person name="Mizoguchi H."/>
            <person name="Goto Y."/>
            <person name="Shimizu F."/>
            <person name="Wakebe H."/>
            <person name="Hishigaki H."/>
            <person name="Watanabe T."/>
            <person name="Sugiyama A."/>
            <person name="Takemoto M."/>
            <person name="Kawakami B."/>
            <person name="Yamazaki M."/>
            <person name="Watanabe K."/>
            <person name="Kumagai A."/>
            <person name="Itakura S."/>
            <person name="Fukuzumi Y."/>
            <person name="Fujimori Y."/>
            <person name="Komiyama M."/>
            <person name="Tashiro H."/>
            <person name="Tanigami A."/>
            <person name="Fujiwara T."/>
            <person name="Ono T."/>
            <person name="Yamada K."/>
            <person name="Fujii Y."/>
            <person name="Ozaki K."/>
            <person name="Hirao M."/>
            <person name="Ohmori Y."/>
            <person name="Kawabata A."/>
            <person name="Hikiji T."/>
            <person name="Kobatake N."/>
            <person name="Inagaki H."/>
            <person name="Ikema Y."/>
            <person name="Okamoto S."/>
            <person name="Okitani R."/>
            <person name="Kawakami T."/>
            <person name="Noguchi S."/>
            <person name="Itoh T."/>
            <person name="Shigeta K."/>
            <person name="Senba T."/>
            <person name="Matsumura K."/>
            <person name="Nakajima Y."/>
            <person name="Mizuno T."/>
            <person name="Morinaga M."/>
            <person name="Sasaki M."/>
            <person name="Togashi T."/>
            <person name="Oyama M."/>
            <person name="Hata H."/>
            <person name="Watanabe M."/>
            <person name="Komatsu T."/>
            <person name="Mizushima-Sugano J."/>
            <person name="Satoh T."/>
            <person name="Shirai Y."/>
            <person name="Takahashi Y."/>
            <person name="Nakagawa K."/>
            <person name="Okumura K."/>
            <person name="Nagase T."/>
            <person name="Nomura N."/>
            <person name="Kikuchi H."/>
            <person name="Masuho Y."/>
            <person name="Yamashita R."/>
            <person name="Nakai K."/>
            <person name="Yada T."/>
            <person name="Nakamura Y."/>
            <person name="Ohara O."/>
            <person name="Isogai T."/>
            <person name="Sugano S."/>
        </authorList>
    </citation>
    <scope>NUCLEOTIDE SEQUENCE [LARGE SCALE MRNA] (ISOFORMS 1 AND 2)</scope>
    <source>
        <tissue>Amygdala</tissue>
        <tissue>Brain</tissue>
    </source>
</reference>
<reference key="2">
    <citation type="submission" date="2005-07" db="EMBL/GenBank/DDBJ databases">
        <authorList>
            <person name="Mural R.J."/>
            <person name="Istrail S."/>
            <person name="Sutton G.G."/>
            <person name="Florea L."/>
            <person name="Halpern A.L."/>
            <person name="Mobarry C.M."/>
            <person name="Lippert R."/>
            <person name="Walenz B."/>
            <person name="Shatkay H."/>
            <person name="Dew I."/>
            <person name="Miller J.R."/>
            <person name="Flanigan M.J."/>
            <person name="Edwards N.J."/>
            <person name="Bolanos R."/>
            <person name="Fasulo D."/>
            <person name="Halldorsson B.V."/>
            <person name="Hannenhalli S."/>
            <person name="Turner R."/>
            <person name="Yooseph S."/>
            <person name="Lu F."/>
            <person name="Nusskern D.R."/>
            <person name="Shue B.C."/>
            <person name="Zheng X.H."/>
            <person name="Zhong F."/>
            <person name="Delcher A.L."/>
            <person name="Huson D.H."/>
            <person name="Kravitz S.A."/>
            <person name="Mouchard L."/>
            <person name="Reinert K."/>
            <person name="Remington K.A."/>
            <person name="Clark A.G."/>
            <person name="Waterman M.S."/>
            <person name="Eichler E.E."/>
            <person name="Adams M.D."/>
            <person name="Hunkapiller M.W."/>
            <person name="Myers E.W."/>
            <person name="Venter J.C."/>
        </authorList>
    </citation>
    <scope>NUCLEOTIDE SEQUENCE [LARGE SCALE GENOMIC DNA]</scope>
</reference>
<reference key="3">
    <citation type="journal article" date="2004" name="Genome Res.">
        <title>The status, quality, and expansion of the NIH full-length cDNA project: the Mammalian Gene Collection (MGC).</title>
        <authorList>
            <consortium name="The MGC Project Team"/>
        </authorList>
    </citation>
    <scope>NUCLEOTIDE SEQUENCE [LARGE SCALE MRNA] (ISOFORM 1)</scope>
    <source>
        <tissue>Muscle</tissue>
    </source>
</reference>
<reference key="4">
    <citation type="journal article" date="2005" name="Nat. Biotechnol.">
        <title>Immunoaffinity profiling of tyrosine phosphorylation in cancer cells.</title>
        <authorList>
            <person name="Rush J."/>
            <person name="Moritz A."/>
            <person name="Lee K.A."/>
            <person name="Guo A."/>
            <person name="Goss V.L."/>
            <person name="Spek E.J."/>
            <person name="Zhang H."/>
            <person name="Zha X.-M."/>
            <person name="Polakiewicz R.D."/>
            <person name="Comb M.J."/>
        </authorList>
    </citation>
    <scope>PHOSPHORYLATION [LARGE SCALE ANALYSIS] AT TYR-494</scope>
    <scope>IDENTIFICATION BY MASS SPECTROMETRY [LARGE SCALE ANALYSIS]</scope>
</reference>
<reference key="5">
    <citation type="journal article" date="2006" name="Cell">
        <title>Global, in vivo, and site-specific phosphorylation dynamics in signaling networks.</title>
        <authorList>
            <person name="Olsen J.V."/>
            <person name="Blagoev B."/>
            <person name="Gnad F."/>
            <person name="Macek B."/>
            <person name="Kumar C."/>
            <person name="Mortensen P."/>
            <person name="Mann M."/>
        </authorList>
    </citation>
    <scope>PHOSPHORYLATION [LARGE SCALE ANALYSIS] AT THR-147; SER-151 AND SER-271</scope>
    <scope>IDENTIFICATION BY MASS SPECTROMETRY [LARGE SCALE ANALYSIS]</scope>
    <source>
        <tissue>Cervix carcinoma</tissue>
    </source>
</reference>
<reference key="6">
    <citation type="journal article" date="2006" name="Nat. Biotechnol.">
        <title>A probability-based approach for high-throughput protein phosphorylation analysis and site localization.</title>
        <authorList>
            <person name="Beausoleil S.A."/>
            <person name="Villen J."/>
            <person name="Gerber S.A."/>
            <person name="Rush J."/>
            <person name="Gygi S.P."/>
        </authorList>
    </citation>
    <scope>PHOSPHORYLATION [LARGE SCALE ANALYSIS] AT SER-325</scope>
    <scope>IDENTIFICATION BY MASS SPECTROMETRY [LARGE SCALE ANALYSIS]</scope>
    <source>
        <tissue>Cervix carcinoma</tissue>
    </source>
</reference>
<reference key="7">
    <citation type="journal article" date="2008" name="J. Proteome Res.">
        <title>Combining protein-based IMAC, peptide-based IMAC, and MudPIT for efficient phosphoproteomic analysis.</title>
        <authorList>
            <person name="Cantin G.T."/>
            <person name="Yi W."/>
            <person name="Lu B."/>
            <person name="Park S.K."/>
            <person name="Xu T."/>
            <person name="Lee J.-D."/>
            <person name="Yates J.R. III"/>
        </authorList>
    </citation>
    <scope>PHOSPHORYLATION [LARGE SCALE ANALYSIS] AT SER-271 AND SER-325</scope>
    <scope>IDENTIFICATION BY MASS SPECTROMETRY [LARGE SCALE ANALYSIS]</scope>
    <source>
        <tissue>Cervix carcinoma</tissue>
    </source>
</reference>
<reference key="8">
    <citation type="journal article" date="2008" name="Proc. Natl. Acad. Sci. U.S.A.">
        <title>A quantitative atlas of mitotic phosphorylation.</title>
        <authorList>
            <person name="Dephoure N."/>
            <person name="Zhou C."/>
            <person name="Villen J."/>
            <person name="Beausoleil S.A."/>
            <person name="Bakalarski C.E."/>
            <person name="Elledge S.J."/>
            <person name="Gygi S.P."/>
        </authorList>
    </citation>
    <scope>PHOSPHORYLATION [LARGE SCALE ANALYSIS] AT SER-271; SER-325; SER-354 AND SER-358</scope>
    <scope>IDENTIFICATION BY MASS SPECTROMETRY [LARGE SCALE ANALYSIS]</scope>
    <source>
        <tissue>Cervix carcinoma</tissue>
    </source>
</reference>
<reference key="9">
    <citation type="journal article" date="2009" name="Sci. Signal.">
        <title>Quantitative phosphoproteomic analysis of T cell receptor signaling reveals system-wide modulation of protein-protein interactions.</title>
        <authorList>
            <person name="Mayya V."/>
            <person name="Lundgren D.H."/>
            <person name="Hwang S.-I."/>
            <person name="Rezaul K."/>
            <person name="Wu L."/>
            <person name="Eng J.K."/>
            <person name="Rodionov V."/>
            <person name="Han D.K."/>
        </authorList>
    </citation>
    <scope>PHOSPHORYLATION [LARGE SCALE ANALYSIS] AT SER-271 AND SER-325</scope>
    <scope>IDENTIFICATION BY MASS SPECTROMETRY [LARGE SCALE ANALYSIS]</scope>
    <source>
        <tissue>Leukemic T-cell</tissue>
    </source>
</reference>
<reference key="10">
    <citation type="journal article" date="2010" name="Sci. Signal.">
        <title>Quantitative phosphoproteomics reveals widespread full phosphorylation site occupancy during mitosis.</title>
        <authorList>
            <person name="Olsen J.V."/>
            <person name="Vermeulen M."/>
            <person name="Santamaria A."/>
            <person name="Kumar C."/>
            <person name="Miller M.L."/>
            <person name="Jensen L.J."/>
            <person name="Gnad F."/>
            <person name="Cox J."/>
            <person name="Jensen T.S."/>
            <person name="Nigg E.A."/>
            <person name="Brunak S."/>
            <person name="Mann M."/>
        </authorList>
    </citation>
    <scope>PHOSPHORYLATION [LARGE SCALE ANALYSIS] AT THR-147; SER-151; THR-159; SER-163; SER-197; SER-201; SER-222; SER-226; SER-235; SER-240; SER-248; SER-271; SER-325 AND SER-358</scope>
    <scope>IDENTIFICATION BY MASS SPECTROMETRY [LARGE SCALE ANALYSIS]</scope>
    <source>
        <tissue>Cervix carcinoma</tissue>
    </source>
</reference>
<reference key="11">
    <citation type="journal article" date="2011" name="Sci. Signal.">
        <title>System-wide temporal characterization of the proteome and phosphoproteome of human embryonic stem cell differentiation.</title>
        <authorList>
            <person name="Rigbolt K.T."/>
            <person name="Prokhorova T.A."/>
            <person name="Akimov V."/>
            <person name="Henningsen J."/>
            <person name="Johansen P.T."/>
            <person name="Kratchmarova I."/>
            <person name="Kassem M."/>
            <person name="Mann M."/>
            <person name="Olsen J.V."/>
            <person name="Blagoev B."/>
        </authorList>
    </citation>
    <scope>PHOSPHORYLATION [LARGE SCALE ANALYSIS] AT THR-147; SER-151; THR-159; SER-163; SER-222; SER-226; SER-235; SER-236; SER-240; SER-248; SER-271; SER-325 AND SER-358</scope>
    <scope>IDENTIFICATION BY MASS SPECTROMETRY [LARGE SCALE ANALYSIS]</scope>
</reference>
<reference key="12">
    <citation type="journal article" date="2013" name="J. Proteome Res.">
        <title>Toward a comprehensive characterization of a human cancer cell phosphoproteome.</title>
        <authorList>
            <person name="Zhou H."/>
            <person name="Di Palma S."/>
            <person name="Preisinger C."/>
            <person name="Peng M."/>
            <person name="Polat A.N."/>
            <person name="Heck A.J."/>
            <person name="Mohammed S."/>
        </authorList>
    </citation>
    <scope>PHOSPHORYLATION [LARGE SCALE ANALYSIS] AT SER-28; THR-159; SER-163; SER-197; SER-201; SER-214; SER-222; SER-226; SER-258; SER-259; SER-271; SER-281; SER-325; SER-391; SER-407 AND SER-567</scope>
    <scope>IDENTIFICATION BY MASS SPECTROMETRY [LARGE SCALE ANALYSIS]</scope>
    <source>
        <tissue>Cervix carcinoma</tissue>
        <tissue>Erythroleukemia</tissue>
    </source>
</reference>
<reference key="13">
    <citation type="journal article" date="2014" name="J. Proteomics">
        <title>An enzyme assisted RP-RPLC approach for in-depth analysis of human liver phosphoproteome.</title>
        <authorList>
            <person name="Bian Y."/>
            <person name="Song C."/>
            <person name="Cheng K."/>
            <person name="Dong M."/>
            <person name="Wang F."/>
            <person name="Huang J."/>
            <person name="Sun D."/>
            <person name="Wang L."/>
            <person name="Ye M."/>
            <person name="Zou H."/>
        </authorList>
    </citation>
    <scope>PHOSPHORYLATION [LARGE SCALE ANALYSIS] AT THR-135 AND SER-151</scope>
    <scope>IDENTIFICATION BY MASS SPECTROMETRY [LARGE SCALE ANALYSIS]</scope>
    <source>
        <tissue>Liver</tissue>
    </source>
</reference>
<reference key="14">
    <citation type="journal article" date="2014" name="Nat. Struct. Mol. Biol.">
        <title>Uncovering global SUMOylation signaling networks in a site-specific manner.</title>
        <authorList>
            <person name="Hendriks I.A."/>
            <person name="D'Souza R.C."/>
            <person name="Yang B."/>
            <person name="Verlaan-de Vries M."/>
            <person name="Mann M."/>
            <person name="Vertegaal A.C."/>
        </authorList>
    </citation>
    <scope>SUMOYLATION [LARGE SCALE ANALYSIS] AT LYS-65</scope>
    <scope>IDENTIFICATION BY MASS SPECTROMETRY [LARGE SCALE ANALYSIS]</scope>
</reference>
<reference key="15">
    <citation type="journal article" date="2017" name="Nat. Struct. Mol. Biol.">
        <title>Site-specific mapping of the human SUMO proteome reveals co-modification with phosphorylation.</title>
        <authorList>
            <person name="Hendriks I.A."/>
            <person name="Lyon D."/>
            <person name="Young C."/>
            <person name="Jensen L.J."/>
            <person name="Vertegaal A.C."/>
            <person name="Nielsen M.L."/>
        </authorList>
    </citation>
    <scope>SUMOYLATION [LARGE SCALE ANALYSIS] AT LYS-65</scope>
    <scope>IDENTIFICATION BY MASS SPECTROMETRY [LARGE SCALE ANALYSIS]</scope>
</reference>
<reference evidence="14" key="16">
    <citation type="journal article" date="2018" name="Cell">
        <title>Structure and Conformational Dynamics of the Human Spliceosomal Bact Complex.</title>
        <authorList>
            <person name="Haselbach D."/>
            <person name="Komarov I."/>
            <person name="Agafonov D.E."/>
            <person name="Hartmuth K."/>
            <person name="Graf B."/>
            <person name="Dybkov O."/>
            <person name="Urlaub H."/>
            <person name="Kastner B."/>
            <person name="Luhrmann R."/>
            <person name="Stark H."/>
        </authorList>
    </citation>
    <scope>STRUCTURE BY ELECTRON MICROSCOPY (16.00 ANGSTROMS)</scope>
    <scope>FUNCTION</scope>
    <scope>SUBUNIT</scope>
    <scope>SUBCELLULAR LOCATION</scope>
</reference>
<reference evidence="11 12 13" key="17">
    <citation type="journal article" date="2018" name="Cell Res.">
        <title>Structure of the human activated spliceosome in three conformational states.</title>
        <authorList>
            <person name="Zhang X."/>
            <person name="Yan C."/>
            <person name="Zhan X."/>
            <person name="Li L."/>
            <person name="Lei J."/>
            <person name="Shi Y."/>
        </authorList>
    </citation>
    <scope>STRUCTURE BY ELECTRON MICROSCOPY (4.90 ANGSTROMS)</scope>
    <scope>FUNCTION</scope>
    <scope>SUBUNIT</scope>
    <scope>SUBCELLULAR LOCATION</scope>
</reference>
<reference evidence="15" key="18">
    <citation type="journal article" date="2021" name="Science">
        <title>Structure of the activated human minor spliceosome.</title>
        <authorList>
            <person name="Bai R."/>
            <person name="Wan R."/>
            <person name="Wang L."/>
            <person name="Xu K."/>
            <person name="Zhang Q."/>
            <person name="Lei J."/>
            <person name="Shi Y."/>
        </authorList>
    </citation>
    <scope>STRUCTURE BY ELECTRON MICROSCOPY (2.89 ANGSTROMS)</scope>
    <scope>SUBUNIT</scope>
</reference>
<name>BUD13_HUMAN</name>